<accession>B4LVR8</accession>
<dbReference type="EMBL" id="CH940650">
    <property type="protein sequence ID" value="EDW67523.1"/>
    <property type="molecule type" value="Genomic_DNA"/>
</dbReference>
<dbReference type="RefSeq" id="XP_002054003.1">
    <property type="nucleotide sequence ID" value="XM_002053967.4"/>
</dbReference>
<dbReference type="RefSeq" id="XP_015027038.1">
    <property type="nucleotide sequence ID" value="XM_015171552.3"/>
</dbReference>
<dbReference type="FunCoup" id="B4LVR8">
    <property type="interactions" value="1136"/>
</dbReference>
<dbReference type="STRING" id="7244.B4LVR8"/>
<dbReference type="EnsemblMetazoa" id="FBtr0238960">
    <property type="protein sequence ID" value="FBpp0237452"/>
    <property type="gene ID" value="FBgn0210137"/>
</dbReference>
<dbReference type="EnsemblMetazoa" id="FBtr0435460">
    <property type="protein sequence ID" value="FBpp0392426"/>
    <property type="gene ID" value="FBgn0210137"/>
</dbReference>
<dbReference type="EnsemblMetazoa" id="XM_002053967.3">
    <property type="protein sequence ID" value="XP_002054003.1"/>
    <property type="gene ID" value="LOC6630395"/>
</dbReference>
<dbReference type="EnsemblMetazoa" id="XM_015171552.2">
    <property type="protein sequence ID" value="XP_015027038.1"/>
    <property type="gene ID" value="LOC6630395"/>
</dbReference>
<dbReference type="GeneID" id="6630395"/>
<dbReference type="KEGG" id="dvi:6630395"/>
<dbReference type="CTD" id="42422"/>
<dbReference type="eggNOG" id="KOG0122">
    <property type="taxonomic scope" value="Eukaryota"/>
</dbReference>
<dbReference type="HOGENOM" id="CLU_034595_0_0_1"/>
<dbReference type="InParanoid" id="B4LVR8"/>
<dbReference type="OMA" id="EEVHMVF"/>
<dbReference type="OrthoDB" id="639027at2759"/>
<dbReference type="PhylomeDB" id="B4LVR8"/>
<dbReference type="Proteomes" id="UP000008792">
    <property type="component" value="Unassembled WGS sequence"/>
</dbReference>
<dbReference type="GO" id="GO:0016282">
    <property type="term" value="C:eukaryotic 43S preinitiation complex"/>
    <property type="evidence" value="ECO:0007669"/>
    <property type="project" value="UniProtKB-UniRule"/>
</dbReference>
<dbReference type="GO" id="GO:0033290">
    <property type="term" value="C:eukaryotic 48S preinitiation complex"/>
    <property type="evidence" value="ECO:0007669"/>
    <property type="project" value="UniProtKB-UniRule"/>
</dbReference>
<dbReference type="GO" id="GO:0005852">
    <property type="term" value="C:eukaryotic translation initiation factor 3 complex"/>
    <property type="evidence" value="ECO:0007669"/>
    <property type="project" value="UniProtKB-UniRule"/>
</dbReference>
<dbReference type="GO" id="GO:0003723">
    <property type="term" value="F:RNA binding"/>
    <property type="evidence" value="ECO:0007669"/>
    <property type="project" value="UniProtKB-UniRule"/>
</dbReference>
<dbReference type="GO" id="GO:0003743">
    <property type="term" value="F:translation initiation factor activity"/>
    <property type="evidence" value="ECO:0007669"/>
    <property type="project" value="UniProtKB-UniRule"/>
</dbReference>
<dbReference type="GO" id="GO:0001732">
    <property type="term" value="P:formation of cytoplasmic translation initiation complex"/>
    <property type="evidence" value="ECO:0007669"/>
    <property type="project" value="UniProtKB-UniRule"/>
</dbReference>
<dbReference type="CDD" id="cd12933">
    <property type="entry name" value="eIF3G"/>
    <property type="match status" value="1"/>
</dbReference>
<dbReference type="CDD" id="cd12408">
    <property type="entry name" value="RRM_eIF3G_like"/>
    <property type="match status" value="1"/>
</dbReference>
<dbReference type="Gene3D" id="3.30.70.330">
    <property type="match status" value="1"/>
</dbReference>
<dbReference type="HAMAP" id="MF_03006">
    <property type="entry name" value="eIF3g"/>
    <property type="match status" value="1"/>
</dbReference>
<dbReference type="InterPro" id="IPR017334">
    <property type="entry name" value="eIF3_g"/>
</dbReference>
<dbReference type="InterPro" id="IPR024675">
    <property type="entry name" value="eIF3g_N"/>
</dbReference>
<dbReference type="InterPro" id="IPR034240">
    <property type="entry name" value="eIF3G_RRM"/>
</dbReference>
<dbReference type="InterPro" id="IPR012677">
    <property type="entry name" value="Nucleotide-bd_a/b_plait_sf"/>
</dbReference>
<dbReference type="InterPro" id="IPR035979">
    <property type="entry name" value="RBD_domain_sf"/>
</dbReference>
<dbReference type="InterPro" id="IPR000504">
    <property type="entry name" value="RRM_dom"/>
</dbReference>
<dbReference type="PANTHER" id="PTHR10352">
    <property type="entry name" value="EUKARYOTIC TRANSLATION INITIATION FACTOR 3 SUBUNIT G"/>
    <property type="match status" value="1"/>
</dbReference>
<dbReference type="Pfam" id="PF12353">
    <property type="entry name" value="eIF3g"/>
    <property type="match status" value="1"/>
</dbReference>
<dbReference type="Pfam" id="PF00076">
    <property type="entry name" value="RRM_1"/>
    <property type="match status" value="1"/>
</dbReference>
<dbReference type="PIRSF" id="PIRSF037949">
    <property type="entry name" value="Transl_init_eIF-3_RNA-bind"/>
    <property type="match status" value="1"/>
</dbReference>
<dbReference type="SMART" id="SM00360">
    <property type="entry name" value="RRM"/>
    <property type="match status" value="1"/>
</dbReference>
<dbReference type="SUPFAM" id="SSF54928">
    <property type="entry name" value="RNA-binding domain, RBD"/>
    <property type="match status" value="1"/>
</dbReference>
<dbReference type="PROSITE" id="PS50102">
    <property type="entry name" value="RRM"/>
    <property type="match status" value="1"/>
</dbReference>
<evidence type="ECO:0000250" key="1">
    <source>
        <dbReference type="UniProtKB" id="Q9VDM6"/>
    </source>
</evidence>
<evidence type="ECO:0000255" key="2">
    <source>
        <dbReference type="HAMAP-Rule" id="MF_03006"/>
    </source>
</evidence>
<feature type="chain" id="PRO_0000365426" description="Eukaryotic translation initiation factor 3 subunit G-2">
    <location>
        <begin position="1"/>
        <end position="259"/>
    </location>
</feature>
<feature type="domain" description="RRM" evidence="2">
    <location>
        <begin position="179"/>
        <end position="257"/>
    </location>
</feature>
<proteinExistence type="inferred from homology"/>
<protein>
    <recommendedName>
        <fullName evidence="1">Eukaryotic translation initiation factor 3 subunit G-2</fullName>
    </recommendedName>
    <alternativeName>
        <fullName evidence="2">Eukaryotic translation initiation factor 3 RNA-binding subunit 2</fullName>
        <shortName evidence="2">eIF-3 RNA-binding subunit 2</shortName>
    </alternativeName>
    <alternativeName>
        <fullName evidence="2">Eukaryotic translation initiation factor 3 subunit 4-2</fullName>
    </alternativeName>
</protein>
<organism>
    <name type="scientific">Drosophila virilis</name>
    <name type="common">Fruit fly</name>
    <dbReference type="NCBI Taxonomy" id="7244"/>
    <lineage>
        <taxon>Eukaryota</taxon>
        <taxon>Metazoa</taxon>
        <taxon>Ecdysozoa</taxon>
        <taxon>Arthropoda</taxon>
        <taxon>Hexapoda</taxon>
        <taxon>Insecta</taxon>
        <taxon>Pterygota</taxon>
        <taxon>Neoptera</taxon>
        <taxon>Endopterygota</taxon>
        <taxon>Diptera</taxon>
        <taxon>Brachycera</taxon>
        <taxon>Muscomorpha</taxon>
        <taxon>Ephydroidea</taxon>
        <taxon>Drosophilidae</taxon>
        <taxon>Drosophila</taxon>
    </lineage>
</organism>
<sequence length="259" mass="29095">MKAAITSWADEVEADYVDGLPPSKEYVDGDYKHVTEYKFNDEGKKIKVVRSFKIEKKIVSRAVAKRRNWVKFGDSKLDKPGPNSYTTKVADEILMNYMGSKDFEHAQDPLDAGKPMAKCRICNGEHWSVKCPYKGTSMDMESKAIAAATAAVGETNKTGKYVPPFLKDGAKGRERDDSSAVRISNLSESMTEDDLEELVKKIGPYTKMYLAREKNSGLCKGFAYVHFKYRKDAAEAIEILNGHGYDHLILSVEWSKPQN</sequence>
<comment type="function">
    <text evidence="2">RNA-binding component of the eukaryotic translation initiation factor 3 (eIF-3) complex, which is involved in protein synthesis of a specialized repertoire of mRNAs and, together with other initiation factors, stimulates binding of mRNA and methionyl-tRNAi to the 40S ribosome. The eIF-3 complex specifically targets and initiates translation of a subset of mRNAs involved in cell proliferation. This subunit can bind 18S rRNA.</text>
</comment>
<comment type="subunit">
    <text evidence="2">Component of the eukaryotic translation initiation factor 3 (eIF-3) complex. The eIF-3 complex interacts with pix.</text>
</comment>
<comment type="subcellular location">
    <subcellularLocation>
        <location evidence="2">Cytoplasm</location>
    </subcellularLocation>
</comment>
<comment type="similarity">
    <text evidence="2">Belongs to the eIF-3 subunit G family.</text>
</comment>
<gene>
    <name evidence="1" type="primary">eIF3g2</name>
    <name evidence="2" type="synonym">eIF3-S4</name>
    <name evidence="1" type="synonym">eIF3gb</name>
    <name type="ORF">GJ23035</name>
</gene>
<keyword id="KW-0963">Cytoplasm</keyword>
<keyword id="KW-0396">Initiation factor</keyword>
<keyword id="KW-0648">Protein biosynthesis</keyword>
<keyword id="KW-1185">Reference proteome</keyword>
<keyword id="KW-0694">RNA-binding</keyword>
<name>EI3G2_DROVI</name>
<reference key="1">
    <citation type="journal article" date="2007" name="Nature">
        <title>Evolution of genes and genomes on the Drosophila phylogeny.</title>
        <authorList>
            <consortium name="Drosophila 12 genomes consortium"/>
        </authorList>
    </citation>
    <scope>NUCLEOTIDE SEQUENCE [LARGE SCALE GENOMIC DNA]</scope>
    <source>
        <strain>Tucson 15010-1051.87</strain>
    </source>
</reference>